<keyword id="KW-1185">Reference proteome</keyword>
<keyword id="KW-0687">Ribonucleoprotein</keyword>
<keyword id="KW-0689">Ribosomal protein</keyword>
<keyword id="KW-0694">RNA-binding</keyword>
<keyword id="KW-0699">rRNA-binding</keyword>
<organism>
    <name type="scientific">Leptospira biflexa serovar Patoc (strain Patoc 1 / ATCC 23582 / Paris)</name>
    <dbReference type="NCBI Taxonomy" id="456481"/>
    <lineage>
        <taxon>Bacteria</taxon>
        <taxon>Pseudomonadati</taxon>
        <taxon>Spirochaetota</taxon>
        <taxon>Spirochaetia</taxon>
        <taxon>Leptospirales</taxon>
        <taxon>Leptospiraceae</taxon>
        <taxon>Leptospira</taxon>
    </lineage>
</organism>
<name>RL21_LEPBP</name>
<feature type="chain" id="PRO_1000143816" description="Large ribosomal subunit protein bL21">
    <location>
        <begin position="1"/>
        <end position="102"/>
    </location>
</feature>
<dbReference type="EMBL" id="CP000786">
    <property type="protein sequence ID" value="ABZ97879.1"/>
    <property type="molecule type" value="Genomic_DNA"/>
</dbReference>
<dbReference type="RefSeq" id="WP_012388757.1">
    <property type="nucleotide sequence ID" value="NC_010602.1"/>
</dbReference>
<dbReference type="SMR" id="B0SRT4"/>
<dbReference type="STRING" id="456481.LEPBI_I1773"/>
<dbReference type="GeneID" id="93341205"/>
<dbReference type="KEGG" id="lbi:LEPBI_I1773"/>
<dbReference type="HOGENOM" id="CLU_061463_3_2_12"/>
<dbReference type="OrthoDB" id="9813334at2"/>
<dbReference type="BioCyc" id="LBIF456481:LEPBI_RS08760-MONOMER"/>
<dbReference type="Proteomes" id="UP000001847">
    <property type="component" value="Chromosome I"/>
</dbReference>
<dbReference type="GO" id="GO:0005737">
    <property type="term" value="C:cytoplasm"/>
    <property type="evidence" value="ECO:0007669"/>
    <property type="project" value="UniProtKB-ARBA"/>
</dbReference>
<dbReference type="GO" id="GO:1990904">
    <property type="term" value="C:ribonucleoprotein complex"/>
    <property type="evidence" value="ECO:0007669"/>
    <property type="project" value="UniProtKB-KW"/>
</dbReference>
<dbReference type="GO" id="GO:0005840">
    <property type="term" value="C:ribosome"/>
    <property type="evidence" value="ECO:0007669"/>
    <property type="project" value="UniProtKB-KW"/>
</dbReference>
<dbReference type="GO" id="GO:0019843">
    <property type="term" value="F:rRNA binding"/>
    <property type="evidence" value="ECO:0007669"/>
    <property type="project" value="UniProtKB-UniRule"/>
</dbReference>
<dbReference type="GO" id="GO:0003735">
    <property type="term" value="F:structural constituent of ribosome"/>
    <property type="evidence" value="ECO:0007669"/>
    <property type="project" value="InterPro"/>
</dbReference>
<dbReference type="GO" id="GO:0006412">
    <property type="term" value="P:translation"/>
    <property type="evidence" value="ECO:0007669"/>
    <property type="project" value="UniProtKB-UniRule"/>
</dbReference>
<dbReference type="HAMAP" id="MF_01363">
    <property type="entry name" value="Ribosomal_bL21"/>
    <property type="match status" value="1"/>
</dbReference>
<dbReference type="InterPro" id="IPR028909">
    <property type="entry name" value="bL21-like"/>
</dbReference>
<dbReference type="InterPro" id="IPR036164">
    <property type="entry name" value="bL21-like_sf"/>
</dbReference>
<dbReference type="InterPro" id="IPR001787">
    <property type="entry name" value="Ribosomal_bL21"/>
</dbReference>
<dbReference type="NCBIfam" id="TIGR00061">
    <property type="entry name" value="L21"/>
    <property type="match status" value="1"/>
</dbReference>
<dbReference type="PANTHER" id="PTHR21349">
    <property type="entry name" value="50S RIBOSOMAL PROTEIN L21"/>
    <property type="match status" value="1"/>
</dbReference>
<dbReference type="PANTHER" id="PTHR21349:SF0">
    <property type="entry name" value="LARGE RIBOSOMAL SUBUNIT PROTEIN BL21M"/>
    <property type="match status" value="1"/>
</dbReference>
<dbReference type="Pfam" id="PF00829">
    <property type="entry name" value="Ribosomal_L21p"/>
    <property type="match status" value="1"/>
</dbReference>
<dbReference type="SUPFAM" id="SSF141091">
    <property type="entry name" value="L21p-like"/>
    <property type="match status" value="1"/>
</dbReference>
<proteinExistence type="inferred from homology"/>
<gene>
    <name evidence="1" type="primary">rplU</name>
    <name type="ordered locus">LEPBI_I1773</name>
</gene>
<comment type="function">
    <text evidence="1">This protein binds to 23S rRNA in the presence of protein L20.</text>
</comment>
<comment type="subunit">
    <text evidence="1">Part of the 50S ribosomal subunit. Contacts protein L20.</text>
</comment>
<comment type="similarity">
    <text evidence="1">Belongs to the bacterial ribosomal protein bL21 family.</text>
</comment>
<reference key="1">
    <citation type="journal article" date="2008" name="PLoS ONE">
        <title>Genome sequence of the saprophyte Leptospira biflexa provides insights into the evolution of Leptospira and the pathogenesis of leptospirosis.</title>
        <authorList>
            <person name="Picardeau M."/>
            <person name="Bulach D.M."/>
            <person name="Bouchier C."/>
            <person name="Zuerner R.L."/>
            <person name="Zidane N."/>
            <person name="Wilson P.J."/>
            <person name="Creno S."/>
            <person name="Kuczek E.S."/>
            <person name="Bommezzadri S."/>
            <person name="Davis J.C."/>
            <person name="McGrath A."/>
            <person name="Johnson M.J."/>
            <person name="Boursaux-Eude C."/>
            <person name="Seemann T."/>
            <person name="Rouy Z."/>
            <person name="Coppel R.L."/>
            <person name="Rood J.I."/>
            <person name="Lajus A."/>
            <person name="Davies J.K."/>
            <person name="Medigue C."/>
            <person name="Adler B."/>
        </authorList>
    </citation>
    <scope>NUCLEOTIDE SEQUENCE [LARGE SCALE GENOMIC DNA]</scope>
    <source>
        <strain>Patoc 1 / ATCC 23582 / Paris</strain>
    </source>
</reference>
<protein>
    <recommendedName>
        <fullName evidence="1">Large ribosomal subunit protein bL21</fullName>
    </recommendedName>
    <alternativeName>
        <fullName evidence="2">50S ribosomal protein L21</fullName>
    </alternativeName>
</protein>
<evidence type="ECO:0000255" key="1">
    <source>
        <dbReference type="HAMAP-Rule" id="MF_01363"/>
    </source>
</evidence>
<evidence type="ECO:0000305" key="2"/>
<accession>B0SRT4</accession>
<sequence>MFAIIELGAKQFKVSPDQVFVAEKTGNTVGSTVETKVLLLSDNNKVNIGSPALSGAKVTLKVLEDCKGEKIHGFKYKKRKNYKKSWGHRQQLQKLQVVSISG</sequence>